<accession>Q7MYL1</accession>
<keyword id="KW-0378">Hydrolase</keyword>
<keyword id="KW-1185">Reference proteome</keyword>
<comment type="function">
    <text evidence="1">Catalyzes the conversion of pppGpp to ppGpp. Guanosine pentaphosphate (pppGpp) is a cytoplasmic signaling molecule which together with ppGpp controls the 'stringent response', an adaptive process that allows bacteria to respond to amino acid starvation, resulting in the coordinated regulation of numerous cellular activities.</text>
</comment>
<comment type="catalytic activity">
    <reaction evidence="1">
        <text>guanosine 3'-diphosphate 5'-triphosphate + H2O = guanosine 3',5'-bis(diphosphate) + phosphate + H(+)</text>
        <dbReference type="Rhea" id="RHEA:13073"/>
        <dbReference type="ChEBI" id="CHEBI:15377"/>
        <dbReference type="ChEBI" id="CHEBI:15378"/>
        <dbReference type="ChEBI" id="CHEBI:43474"/>
        <dbReference type="ChEBI" id="CHEBI:77828"/>
        <dbReference type="ChEBI" id="CHEBI:142410"/>
        <dbReference type="EC" id="3.6.1.40"/>
    </reaction>
</comment>
<comment type="pathway">
    <text evidence="1">Purine metabolism; ppGpp biosynthesis; ppGpp from GTP: step 2/2.</text>
</comment>
<comment type="similarity">
    <text evidence="1">Belongs to the GppA/Ppx family. GppA subfamily.</text>
</comment>
<reference key="1">
    <citation type="journal article" date="2003" name="Nat. Biotechnol.">
        <title>The genome sequence of the entomopathogenic bacterium Photorhabdus luminescens.</title>
        <authorList>
            <person name="Duchaud E."/>
            <person name="Rusniok C."/>
            <person name="Frangeul L."/>
            <person name="Buchrieser C."/>
            <person name="Givaudan A."/>
            <person name="Taourit S."/>
            <person name="Bocs S."/>
            <person name="Boursaux-Eude C."/>
            <person name="Chandler M."/>
            <person name="Charles J.-F."/>
            <person name="Dassa E."/>
            <person name="Derose R."/>
            <person name="Derzelle S."/>
            <person name="Freyssinet G."/>
            <person name="Gaudriault S."/>
            <person name="Medigue C."/>
            <person name="Lanois A."/>
            <person name="Powell K."/>
            <person name="Siguier P."/>
            <person name="Vincent R."/>
            <person name="Wingate V."/>
            <person name="Zouine M."/>
            <person name="Glaser P."/>
            <person name="Boemare N."/>
            <person name="Danchin A."/>
            <person name="Kunst F."/>
        </authorList>
    </citation>
    <scope>NUCLEOTIDE SEQUENCE [LARGE SCALE GENOMIC DNA]</scope>
    <source>
        <strain>DSM 15139 / CIP 105565 / TT01</strain>
    </source>
</reference>
<name>GPPA_PHOLL</name>
<dbReference type="EC" id="3.6.1.40" evidence="1"/>
<dbReference type="EMBL" id="BX571874">
    <property type="protein sequence ID" value="CAE17038.1"/>
    <property type="molecule type" value="Genomic_DNA"/>
</dbReference>
<dbReference type="RefSeq" id="WP_011148736.1">
    <property type="nucleotide sequence ID" value="NC_005126.1"/>
</dbReference>
<dbReference type="SMR" id="Q7MYL1"/>
<dbReference type="STRING" id="243265.plu4666"/>
<dbReference type="GeneID" id="48850883"/>
<dbReference type="KEGG" id="plu:plu4666"/>
<dbReference type="eggNOG" id="COG0248">
    <property type="taxonomic scope" value="Bacteria"/>
</dbReference>
<dbReference type="HOGENOM" id="CLU_025908_4_0_6"/>
<dbReference type="OrthoDB" id="9793035at2"/>
<dbReference type="UniPathway" id="UPA00908">
    <property type="reaction ID" value="UER00885"/>
</dbReference>
<dbReference type="Proteomes" id="UP000002514">
    <property type="component" value="Chromosome"/>
</dbReference>
<dbReference type="GO" id="GO:0008894">
    <property type="term" value="F:guanosine-5'-triphosphate,3'-diphosphate diphosphatase activity"/>
    <property type="evidence" value="ECO:0007669"/>
    <property type="project" value="UniProtKB-UniRule"/>
</dbReference>
<dbReference type="GO" id="GO:0015974">
    <property type="term" value="P:guanosine pentaphosphate catabolic process"/>
    <property type="evidence" value="ECO:0007669"/>
    <property type="project" value="InterPro"/>
</dbReference>
<dbReference type="GO" id="GO:0015970">
    <property type="term" value="P:guanosine tetraphosphate biosynthetic process"/>
    <property type="evidence" value="ECO:0007669"/>
    <property type="project" value="UniProtKB-UniRule"/>
</dbReference>
<dbReference type="GO" id="GO:0015949">
    <property type="term" value="P:nucleobase-containing small molecule interconversion"/>
    <property type="evidence" value="ECO:0007669"/>
    <property type="project" value="TreeGrafter"/>
</dbReference>
<dbReference type="FunFam" id="1.10.3210.10:FF:000004">
    <property type="entry name" value="Guanosine-5'-triphosphate,3'-diphosphate pyrophosphatase"/>
    <property type="match status" value="1"/>
</dbReference>
<dbReference type="FunFam" id="3.30.420.150:FF:000001">
    <property type="entry name" value="Guanosine-5'-triphosphate,3'-diphosphate pyrophosphatase"/>
    <property type="match status" value="1"/>
</dbReference>
<dbReference type="FunFam" id="3.30.420.40:FF:000023">
    <property type="entry name" value="Guanosine-5'-triphosphate,3'-diphosphate pyrophosphatase"/>
    <property type="match status" value="1"/>
</dbReference>
<dbReference type="Gene3D" id="3.30.420.40">
    <property type="match status" value="1"/>
</dbReference>
<dbReference type="Gene3D" id="3.30.420.150">
    <property type="entry name" value="Exopolyphosphatase. Domain 2"/>
    <property type="match status" value="1"/>
</dbReference>
<dbReference type="Gene3D" id="1.10.3210.10">
    <property type="entry name" value="Hypothetical protein af1432"/>
    <property type="match status" value="1"/>
</dbReference>
<dbReference type="HAMAP" id="MF_01550">
    <property type="entry name" value="GppA"/>
    <property type="match status" value="1"/>
</dbReference>
<dbReference type="InterPro" id="IPR043129">
    <property type="entry name" value="ATPase_NBD"/>
</dbReference>
<dbReference type="InterPro" id="IPR050273">
    <property type="entry name" value="GppA/Ppx_hydrolase"/>
</dbReference>
<dbReference type="InterPro" id="IPR023709">
    <property type="entry name" value="Guo-5TP_3DP_PyrP"/>
</dbReference>
<dbReference type="InterPro" id="IPR048950">
    <property type="entry name" value="Ppx_GppA_C"/>
</dbReference>
<dbReference type="InterPro" id="IPR003695">
    <property type="entry name" value="Ppx_GppA_N"/>
</dbReference>
<dbReference type="InterPro" id="IPR030673">
    <property type="entry name" value="PyroPPase_GppA_Ppx"/>
</dbReference>
<dbReference type="NCBIfam" id="NF008260">
    <property type="entry name" value="PRK11031.1"/>
    <property type="match status" value="1"/>
</dbReference>
<dbReference type="PANTHER" id="PTHR30005">
    <property type="entry name" value="EXOPOLYPHOSPHATASE"/>
    <property type="match status" value="1"/>
</dbReference>
<dbReference type="PANTHER" id="PTHR30005:SF0">
    <property type="entry name" value="RETROGRADE REGULATION PROTEIN 2"/>
    <property type="match status" value="1"/>
</dbReference>
<dbReference type="Pfam" id="PF02541">
    <property type="entry name" value="Ppx-GppA"/>
    <property type="match status" value="1"/>
</dbReference>
<dbReference type="Pfam" id="PF21447">
    <property type="entry name" value="Ppx-GppA_III"/>
    <property type="match status" value="1"/>
</dbReference>
<dbReference type="PIRSF" id="PIRSF001267">
    <property type="entry name" value="Pyrophosphatase_GppA_Ppx"/>
    <property type="match status" value="1"/>
</dbReference>
<dbReference type="SUPFAM" id="SSF53067">
    <property type="entry name" value="Actin-like ATPase domain"/>
    <property type="match status" value="2"/>
</dbReference>
<dbReference type="SUPFAM" id="SSF109604">
    <property type="entry name" value="HD-domain/PDEase-like"/>
    <property type="match status" value="1"/>
</dbReference>
<organism>
    <name type="scientific">Photorhabdus laumondii subsp. laumondii (strain DSM 15139 / CIP 105565 / TT01)</name>
    <name type="common">Photorhabdus luminescens subsp. laumondii</name>
    <dbReference type="NCBI Taxonomy" id="243265"/>
    <lineage>
        <taxon>Bacteria</taxon>
        <taxon>Pseudomonadati</taxon>
        <taxon>Pseudomonadota</taxon>
        <taxon>Gammaproteobacteria</taxon>
        <taxon>Enterobacterales</taxon>
        <taxon>Morganellaceae</taxon>
        <taxon>Photorhabdus</taxon>
    </lineage>
</organism>
<evidence type="ECO:0000255" key="1">
    <source>
        <dbReference type="HAMAP-Rule" id="MF_01550"/>
    </source>
</evidence>
<protein>
    <recommendedName>
        <fullName evidence="1">Guanosine-5'-triphosphate,3'-diphosphate pyrophosphatase</fullName>
        <ecNumber evidence="1">3.6.1.40</ecNumber>
    </recommendedName>
    <alternativeName>
        <fullName evidence="1">Guanosine pentaphosphate phosphohydrolase</fullName>
    </alternativeName>
    <alternativeName>
        <fullName evidence="1">pppGpp-5'-phosphohydrolase</fullName>
    </alternativeName>
</protein>
<proteinExistence type="inferred from homology"/>
<sequence>MLSSSSLYAAIDLGSNSFHMLVVREVSGSMQILARIKRKVRLAAGLDKNNRLSQQAMERGWQCLRIFSERLQDIPPSQIRVVATATLRIAENSDEFVGKASEILDCPVKVISGEDEARLIYQGVAHTTGGPEKRLVVDIGGASTELVTGNGAKASQLSSLSMGCVTWLEGYFNDRSLTEENFARAEAAAHETLKLIAPKLIEQGWQICVGASGTVQALQEIMIAQGMDELITLPKLQELKHKAIECGKLEELEIEGLTLERALVFPSGLAILIAIFQALNIESMILAGGALREGLVYGMLDLPIEPDIRTRTLRNIQRRFQLDVEQSQRVKQLAEHFLQQVAKPWELDSRCHELLQSACLIHEIGLSIDFHQAPSHAAYLINYLALPGYTPAQKKLLATLLKNQSGPIDLFSFNQQNALPLIQAQRLCRLLRLAIIFANRRRNDTLPALRLKVSDEALTITLPHGWLMQHPLRAESLQQEIQWQNHAQWSLVLGEQDAQT</sequence>
<gene>
    <name evidence="1" type="primary">gppA</name>
    <name type="ordered locus">plu4666</name>
</gene>
<feature type="chain" id="PRO_0000194284" description="Guanosine-5'-triphosphate,3'-diphosphate pyrophosphatase">
    <location>
        <begin position="1"/>
        <end position="500"/>
    </location>
</feature>